<feature type="chain" id="PRO_1000128452" description="Small ribosomal subunit protein uS14A">
    <location>
        <begin position="1"/>
        <end position="101"/>
    </location>
</feature>
<feature type="region of interest" description="Disordered" evidence="2">
    <location>
        <begin position="31"/>
        <end position="59"/>
    </location>
</feature>
<proteinExistence type="inferred from homology"/>
<protein>
    <recommendedName>
        <fullName evidence="1">Small ribosomal subunit protein uS14A</fullName>
    </recommendedName>
    <alternativeName>
        <fullName evidence="3">30S ribosomal protein S14</fullName>
    </alternativeName>
</protein>
<comment type="function">
    <text evidence="1">Binds 16S rRNA, required for the assembly of 30S particles and may also be responsible for determining the conformation of the 16S rRNA at the A site.</text>
</comment>
<comment type="subunit">
    <text evidence="1">Part of the 30S ribosomal subunit. Contacts proteins S3 and S10.</text>
</comment>
<comment type="similarity">
    <text evidence="1">Belongs to the universal ribosomal protein uS14 family.</text>
</comment>
<sequence>MAKKSKIAKNEQRRAIVERYAERRAELKEIIRSPASSPEQRVAAQSELNRQPRDASAVRLRNRDAVDGRPRGYLRKFGLSRVRVRELVHDGSLPGVRKASW</sequence>
<reference key="1">
    <citation type="journal article" date="2009" name="PLoS ONE">
        <title>Non mycobacterial virulence genes in the genome of the emerging pathogen Mycobacterium abscessus.</title>
        <authorList>
            <person name="Ripoll F."/>
            <person name="Pasek S."/>
            <person name="Schenowitz C."/>
            <person name="Dossat C."/>
            <person name="Barbe V."/>
            <person name="Rottman M."/>
            <person name="Macheras E."/>
            <person name="Heym B."/>
            <person name="Herrmann J.L."/>
            <person name="Daffe M."/>
            <person name="Brosch R."/>
            <person name="Risler J.L."/>
            <person name="Gaillard J.L."/>
        </authorList>
    </citation>
    <scope>NUCLEOTIDE SEQUENCE [LARGE SCALE GENOMIC DNA]</scope>
    <source>
        <strain>ATCC 19977 / DSM 44196 / CCUG 20993 / CIP 104536 / JCM 13569 / NCTC 13031 / TMC 1543 / L948</strain>
    </source>
</reference>
<dbReference type="EMBL" id="CU458896">
    <property type="protein sequence ID" value="CAM60431.1"/>
    <property type="molecule type" value="Genomic_DNA"/>
</dbReference>
<dbReference type="RefSeq" id="WP_005063153.1">
    <property type="nucleotide sequence ID" value="NZ_MLCG01000005.1"/>
</dbReference>
<dbReference type="SMR" id="B1MFN1"/>
<dbReference type="GeneID" id="93377274"/>
<dbReference type="KEGG" id="mab:MAB_0332c"/>
<dbReference type="Proteomes" id="UP000007137">
    <property type="component" value="Chromosome"/>
</dbReference>
<dbReference type="GO" id="GO:0015935">
    <property type="term" value="C:small ribosomal subunit"/>
    <property type="evidence" value="ECO:0007669"/>
    <property type="project" value="TreeGrafter"/>
</dbReference>
<dbReference type="GO" id="GO:0019843">
    <property type="term" value="F:rRNA binding"/>
    <property type="evidence" value="ECO:0007669"/>
    <property type="project" value="UniProtKB-UniRule"/>
</dbReference>
<dbReference type="GO" id="GO:0003735">
    <property type="term" value="F:structural constituent of ribosome"/>
    <property type="evidence" value="ECO:0007669"/>
    <property type="project" value="InterPro"/>
</dbReference>
<dbReference type="GO" id="GO:0006412">
    <property type="term" value="P:translation"/>
    <property type="evidence" value="ECO:0007669"/>
    <property type="project" value="UniProtKB-UniRule"/>
</dbReference>
<dbReference type="FunFam" id="1.10.287.1480:FF:000001">
    <property type="entry name" value="30S ribosomal protein S14"/>
    <property type="match status" value="1"/>
</dbReference>
<dbReference type="Gene3D" id="1.10.287.1480">
    <property type="match status" value="1"/>
</dbReference>
<dbReference type="HAMAP" id="MF_00537">
    <property type="entry name" value="Ribosomal_uS14_1"/>
    <property type="match status" value="1"/>
</dbReference>
<dbReference type="InterPro" id="IPR001209">
    <property type="entry name" value="Ribosomal_uS14"/>
</dbReference>
<dbReference type="InterPro" id="IPR023036">
    <property type="entry name" value="Ribosomal_uS14_bac/plastid"/>
</dbReference>
<dbReference type="NCBIfam" id="NF006477">
    <property type="entry name" value="PRK08881.1"/>
    <property type="match status" value="1"/>
</dbReference>
<dbReference type="PANTHER" id="PTHR19836">
    <property type="entry name" value="30S RIBOSOMAL PROTEIN S14"/>
    <property type="match status" value="1"/>
</dbReference>
<dbReference type="PANTHER" id="PTHR19836:SF23">
    <property type="entry name" value="SMALL RIBOSOMAL SUBUNIT PROTEIN US14A"/>
    <property type="match status" value="1"/>
</dbReference>
<dbReference type="Pfam" id="PF00253">
    <property type="entry name" value="Ribosomal_S14"/>
    <property type="match status" value="1"/>
</dbReference>
<dbReference type="SUPFAM" id="SSF57716">
    <property type="entry name" value="Glucocorticoid receptor-like (DNA-binding domain)"/>
    <property type="match status" value="1"/>
</dbReference>
<accession>B1MFN1</accession>
<organism>
    <name type="scientific">Mycobacteroides abscessus (strain ATCC 19977 / DSM 44196 / CCUG 20993 / CIP 104536 / JCM 13569 / NCTC 13031 / TMC 1543 / L948)</name>
    <name type="common">Mycobacterium abscessus</name>
    <dbReference type="NCBI Taxonomy" id="561007"/>
    <lineage>
        <taxon>Bacteria</taxon>
        <taxon>Bacillati</taxon>
        <taxon>Actinomycetota</taxon>
        <taxon>Actinomycetes</taxon>
        <taxon>Mycobacteriales</taxon>
        <taxon>Mycobacteriaceae</taxon>
        <taxon>Mycobacteroides</taxon>
        <taxon>Mycobacteroides abscessus</taxon>
    </lineage>
</organism>
<evidence type="ECO:0000255" key="1">
    <source>
        <dbReference type="HAMAP-Rule" id="MF_00537"/>
    </source>
</evidence>
<evidence type="ECO:0000256" key="2">
    <source>
        <dbReference type="SAM" id="MobiDB-lite"/>
    </source>
</evidence>
<evidence type="ECO:0000305" key="3"/>
<name>RS14_MYCA9</name>
<keyword id="KW-1185">Reference proteome</keyword>
<keyword id="KW-0687">Ribonucleoprotein</keyword>
<keyword id="KW-0689">Ribosomal protein</keyword>
<keyword id="KW-0694">RNA-binding</keyword>
<keyword id="KW-0699">rRNA-binding</keyword>
<gene>
    <name evidence="1" type="primary">rpsN</name>
    <name type="ordered locus">MAB_0332c</name>
</gene>